<keyword id="KW-0227">DNA damage</keyword>
<keyword id="KW-0233">DNA recombination</keyword>
<keyword id="KW-0234">DNA repair</keyword>
<keyword id="KW-0479">Metal-binding</keyword>
<keyword id="KW-0862">Zinc</keyword>
<keyword id="KW-0863">Zinc-finger</keyword>
<evidence type="ECO:0000255" key="1">
    <source>
        <dbReference type="HAMAP-Rule" id="MF_00017"/>
    </source>
</evidence>
<gene>
    <name evidence="1" type="primary">recR</name>
    <name type="ordered locus">PMM1097</name>
</gene>
<feature type="chain" id="PRO_0000190365" description="Recombination protein RecR">
    <location>
        <begin position="1"/>
        <end position="199"/>
    </location>
</feature>
<feature type="domain" description="Toprim" evidence="1">
    <location>
        <begin position="81"/>
        <end position="175"/>
    </location>
</feature>
<feature type="zinc finger region" description="C4-type" evidence="1">
    <location>
        <begin position="58"/>
        <end position="73"/>
    </location>
</feature>
<accession>Q7V0Z7</accession>
<name>RECR_PROMP</name>
<comment type="function">
    <text evidence="1">May play a role in DNA repair. It seems to be involved in an RecBC-independent recombinational process of DNA repair. It may act with RecF and RecO.</text>
</comment>
<comment type="similarity">
    <text evidence="1">Belongs to the RecR family.</text>
</comment>
<proteinExistence type="inferred from homology"/>
<protein>
    <recommendedName>
        <fullName evidence="1">Recombination protein RecR</fullName>
    </recommendedName>
</protein>
<reference key="1">
    <citation type="journal article" date="2003" name="Nature">
        <title>Genome divergence in two Prochlorococcus ecotypes reflects oceanic niche differentiation.</title>
        <authorList>
            <person name="Rocap G."/>
            <person name="Larimer F.W."/>
            <person name="Lamerdin J.E."/>
            <person name="Malfatti S."/>
            <person name="Chain P."/>
            <person name="Ahlgren N.A."/>
            <person name="Arellano A."/>
            <person name="Coleman M."/>
            <person name="Hauser L."/>
            <person name="Hess W.R."/>
            <person name="Johnson Z.I."/>
            <person name="Land M.L."/>
            <person name="Lindell D."/>
            <person name="Post A.F."/>
            <person name="Regala W."/>
            <person name="Shah M."/>
            <person name="Shaw S.L."/>
            <person name="Steglich C."/>
            <person name="Sullivan M.B."/>
            <person name="Ting C.S."/>
            <person name="Tolonen A."/>
            <person name="Webb E.A."/>
            <person name="Zinser E.R."/>
            <person name="Chisholm S.W."/>
        </authorList>
    </citation>
    <scope>NUCLEOTIDE SEQUENCE [LARGE SCALE GENOMIC DNA]</scope>
    <source>
        <strain>CCMP1986 / NIES-2087 / MED4</strain>
    </source>
</reference>
<sequence>MITFTKPLSKLIGHFEKFPGIGPRTAQRLALFILKQPESSIRDFSKALLEAHSNVGHCKKCFNLTSEEECEICRNTERNQKIICVVAETKDLLALERSREFKGTYHVIGGLISPMDSISPELLEIRSLVERVSKSDIDEIILALTPSVEGDTTSLYIGKLLTPFTKVTRIAYGLPMGSELEYVDEVTLARALEGRTNLI</sequence>
<dbReference type="EMBL" id="BX548174">
    <property type="protein sequence ID" value="CAE19556.1"/>
    <property type="molecule type" value="Genomic_DNA"/>
</dbReference>
<dbReference type="RefSeq" id="WP_011132730.1">
    <property type="nucleotide sequence ID" value="NC_005072.1"/>
</dbReference>
<dbReference type="SMR" id="Q7V0Z7"/>
<dbReference type="STRING" id="59919.PMM1097"/>
<dbReference type="KEGG" id="pmm:PMM1097"/>
<dbReference type="eggNOG" id="COG0353">
    <property type="taxonomic scope" value="Bacteria"/>
</dbReference>
<dbReference type="HOGENOM" id="CLU_060739_1_0_3"/>
<dbReference type="OrthoDB" id="9802672at2"/>
<dbReference type="Proteomes" id="UP000001026">
    <property type="component" value="Chromosome"/>
</dbReference>
<dbReference type="GO" id="GO:0003677">
    <property type="term" value="F:DNA binding"/>
    <property type="evidence" value="ECO:0007669"/>
    <property type="project" value="UniProtKB-UniRule"/>
</dbReference>
<dbReference type="GO" id="GO:0008270">
    <property type="term" value="F:zinc ion binding"/>
    <property type="evidence" value="ECO:0007669"/>
    <property type="project" value="UniProtKB-KW"/>
</dbReference>
<dbReference type="GO" id="GO:0006310">
    <property type="term" value="P:DNA recombination"/>
    <property type="evidence" value="ECO:0007669"/>
    <property type="project" value="UniProtKB-UniRule"/>
</dbReference>
<dbReference type="GO" id="GO:0006281">
    <property type="term" value="P:DNA repair"/>
    <property type="evidence" value="ECO:0007669"/>
    <property type="project" value="UniProtKB-UniRule"/>
</dbReference>
<dbReference type="CDD" id="cd01025">
    <property type="entry name" value="TOPRIM_recR"/>
    <property type="match status" value="1"/>
</dbReference>
<dbReference type="Gene3D" id="3.30.60.80">
    <property type="match status" value="1"/>
</dbReference>
<dbReference type="Gene3D" id="3.40.1360.10">
    <property type="match status" value="1"/>
</dbReference>
<dbReference type="Gene3D" id="6.10.250.240">
    <property type="match status" value="1"/>
</dbReference>
<dbReference type="Gene3D" id="1.10.8.420">
    <property type="entry name" value="RecR Domain 1"/>
    <property type="match status" value="1"/>
</dbReference>
<dbReference type="HAMAP" id="MF_00017">
    <property type="entry name" value="RecR"/>
    <property type="match status" value="1"/>
</dbReference>
<dbReference type="InterPro" id="IPR000093">
    <property type="entry name" value="DNA_Rcmb_RecR"/>
</dbReference>
<dbReference type="InterPro" id="IPR023627">
    <property type="entry name" value="Rcmb_RecR"/>
</dbReference>
<dbReference type="InterPro" id="IPR015967">
    <property type="entry name" value="Rcmb_RecR_Znf"/>
</dbReference>
<dbReference type="InterPro" id="IPR006171">
    <property type="entry name" value="TOPRIM_dom"/>
</dbReference>
<dbReference type="InterPro" id="IPR034137">
    <property type="entry name" value="TOPRIM_RecR"/>
</dbReference>
<dbReference type="NCBIfam" id="TIGR00615">
    <property type="entry name" value="recR"/>
    <property type="match status" value="1"/>
</dbReference>
<dbReference type="PANTHER" id="PTHR30446">
    <property type="entry name" value="RECOMBINATION PROTEIN RECR"/>
    <property type="match status" value="1"/>
</dbReference>
<dbReference type="PANTHER" id="PTHR30446:SF0">
    <property type="entry name" value="RECOMBINATION PROTEIN RECR"/>
    <property type="match status" value="1"/>
</dbReference>
<dbReference type="Pfam" id="PF21175">
    <property type="entry name" value="RecR_C"/>
    <property type="match status" value="1"/>
</dbReference>
<dbReference type="Pfam" id="PF21176">
    <property type="entry name" value="RecR_HhH"/>
    <property type="match status" value="1"/>
</dbReference>
<dbReference type="Pfam" id="PF02132">
    <property type="entry name" value="RecR_ZnF"/>
    <property type="match status" value="1"/>
</dbReference>
<dbReference type="Pfam" id="PF13662">
    <property type="entry name" value="Toprim_4"/>
    <property type="match status" value="1"/>
</dbReference>
<dbReference type="SMART" id="SM00493">
    <property type="entry name" value="TOPRIM"/>
    <property type="match status" value="1"/>
</dbReference>
<dbReference type="SUPFAM" id="SSF111304">
    <property type="entry name" value="Recombination protein RecR"/>
    <property type="match status" value="1"/>
</dbReference>
<dbReference type="PROSITE" id="PS01300">
    <property type="entry name" value="RECR"/>
    <property type="match status" value="1"/>
</dbReference>
<dbReference type="PROSITE" id="PS50880">
    <property type="entry name" value="TOPRIM"/>
    <property type="match status" value="1"/>
</dbReference>
<organism>
    <name type="scientific">Prochlorococcus marinus subsp. pastoris (strain CCMP1986 / NIES-2087 / MED4)</name>
    <dbReference type="NCBI Taxonomy" id="59919"/>
    <lineage>
        <taxon>Bacteria</taxon>
        <taxon>Bacillati</taxon>
        <taxon>Cyanobacteriota</taxon>
        <taxon>Cyanophyceae</taxon>
        <taxon>Synechococcales</taxon>
        <taxon>Prochlorococcaceae</taxon>
        <taxon>Prochlorococcus</taxon>
    </lineage>
</organism>